<accession>B7M5T3</accession>
<protein>
    <recommendedName>
        <fullName evidence="1">Nucleoside triphosphatase NudI</fullName>
        <ecNumber evidence="1">3.6.1.9</ecNumber>
    </recommendedName>
    <alternativeName>
        <fullName evidence="1">Nucleotide diphosphatase NudI</fullName>
    </alternativeName>
    <alternativeName>
        <fullName evidence="1">Pyrimidine deoxynucleoside triphosphate diphosphatase</fullName>
    </alternativeName>
    <alternativeName>
        <fullName evidence="1">dCTP diphosphatase</fullName>
        <ecNumber evidence="1">3.6.1.12</ecNumber>
    </alternativeName>
    <alternativeName>
        <fullName evidence="1">dTTP diphosphatase</fullName>
        <ecNumber evidence="1">3.6.1.-</ecNumber>
    </alternativeName>
    <alternativeName>
        <fullName evidence="1">dUTP diphosphatase</fullName>
        <ecNumber evidence="1">3.6.1.23</ecNumber>
    </alternativeName>
</protein>
<feature type="chain" id="PRO_1000188481" description="Nucleoside triphosphatase NudI">
    <location>
        <begin position="1"/>
        <end position="141"/>
    </location>
</feature>
<feature type="domain" description="Nudix hydrolase" evidence="1">
    <location>
        <begin position="1"/>
        <end position="141"/>
    </location>
</feature>
<feature type="short sequence motif" description="Nudix box">
    <location>
        <begin position="38"/>
        <end position="59"/>
    </location>
</feature>
<sequence>MRQRTIVCPLIQNDGAYLLCKMADDRGVFPGQWALSGGGVESGERIEEALRREIREELGEQLLLTEITPWTFSDDIRTKTYADGRKEEIYMIYLIFDCVSANREVKINEEFQDYAWVKPEDLVHYDLNVATRKTLRLKGLL</sequence>
<reference key="1">
    <citation type="journal article" date="2009" name="PLoS Genet.">
        <title>Organised genome dynamics in the Escherichia coli species results in highly diverse adaptive paths.</title>
        <authorList>
            <person name="Touchon M."/>
            <person name="Hoede C."/>
            <person name="Tenaillon O."/>
            <person name="Barbe V."/>
            <person name="Baeriswyl S."/>
            <person name="Bidet P."/>
            <person name="Bingen E."/>
            <person name="Bonacorsi S."/>
            <person name="Bouchier C."/>
            <person name="Bouvet O."/>
            <person name="Calteau A."/>
            <person name="Chiapello H."/>
            <person name="Clermont O."/>
            <person name="Cruveiller S."/>
            <person name="Danchin A."/>
            <person name="Diard M."/>
            <person name="Dossat C."/>
            <person name="Karoui M.E."/>
            <person name="Frapy E."/>
            <person name="Garry L."/>
            <person name="Ghigo J.M."/>
            <person name="Gilles A.M."/>
            <person name="Johnson J."/>
            <person name="Le Bouguenec C."/>
            <person name="Lescat M."/>
            <person name="Mangenot S."/>
            <person name="Martinez-Jehanne V."/>
            <person name="Matic I."/>
            <person name="Nassif X."/>
            <person name="Oztas S."/>
            <person name="Petit M.A."/>
            <person name="Pichon C."/>
            <person name="Rouy Z."/>
            <person name="Ruf C.S."/>
            <person name="Schneider D."/>
            <person name="Tourret J."/>
            <person name="Vacherie B."/>
            <person name="Vallenet D."/>
            <person name="Medigue C."/>
            <person name="Rocha E.P.C."/>
            <person name="Denamur E."/>
        </authorList>
    </citation>
    <scope>NUCLEOTIDE SEQUENCE [LARGE SCALE GENOMIC DNA]</scope>
    <source>
        <strain>IAI1</strain>
    </source>
</reference>
<keyword id="KW-0378">Hydrolase</keyword>
<keyword id="KW-0460">Magnesium</keyword>
<proteinExistence type="inferred from homology"/>
<gene>
    <name evidence="1" type="primary">nudI</name>
    <name type="ordered locus">ECIAI1_2326</name>
</gene>
<name>NUDI_ECO8A</name>
<comment type="function">
    <text evidence="1">Catalyzes the hydrolysis of nucleoside triphosphates, with a preference for pyrimidine deoxynucleoside triphosphates (dUTP, dTTP and dCTP).</text>
</comment>
<comment type="catalytic activity">
    <reaction evidence="1">
        <text>a ribonucleoside 5'-triphosphate + H2O = a ribonucleoside 5'-phosphate + diphosphate + H(+)</text>
        <dbReference type="Rhea" id="RHEA:23996"/>
        <dbReference type="ChEBI" id="CHEBI:15377"/>
        <dbReference type="ChEBI" id="CHEBI:15378"/>
        <dbReference type="ChEBI" id="CHEBI:33019"/>
        <dbReference type="ChEBI" id="CHEBI:58043"/>
        <dbReference type="ChEBI" id="CHEBI:61557"/>
        <dbReference type="EC" id="3.6.1.9"/>
    </reaction>
</comment>
<comment type="catalytic activity">
    <reaction evidence="1">
        <text>a 2'-deoxyribonucleoside 5'-triphosphate + H2O = a 2'-deoxyribonucleoside 5'-phosphate + diphosphate + H(+)</text>
        <dbReference type="Rhea" id="RHEA:44644"/>
        <dbReference type="ChEBI" id="CHEBI:15377"/>
        <dbReference type="ChEBI" id="CHEBI:15378"/>
        <dbReference type="ChEBI" id="CHEBI:33019"/>
        <dbReference type="ChEBI" id="CHEBI:61560"/>
        <dbReference type="ChEBI" id="CHEBI:65317"/>
        <dbReference type="EC" id="3.6.1.9"/>
    </reaction>
</comment>
<comment type="catalytic activity">
    <reaction evidence="1">
        <text>dUTP + H2O = dUMP + diphosphate + H(+)</text>
        <dbReference type="Rhea" id="RHEA:10248"/>
        <dbReference type="ChEBI" id="CHEBI:15377"/>
        <dbReference type="ChEBI" id="CHEBI:15378"/>
        <dbReference type="ChEBI" id="CHEBI:33019"/>
        <dbReference type="ChEBI" id="CHEBI:61555"/>
        <dbReference type="ChEBI" id="CHEBI:246422"/>
        <dbReference type="EC" id="3.6.1.9"/>
    </reaction>
</comment>
<comment type="catalytic activity">
    <reaction evidence="1">
        <text>dUTP + H2O = dUMP + diphosphate + H(+)</text>
        <dbReference type="Rhea" id="RHEA:10248"/>
        <dbReference type="ChEBI" id="CHEBI:15377"/>
        <dbReference type="ChEBI" id="CHEBI:15378"/>
        <dbReference type="ChEBI" id="CHEBI:33019"/>
        <dbReference type="ChEBI" id="CHEBI:61555"/>
        <dbReference type="ChEBI" id="CHEBI:246422"/>
        <dbReference type="EC" id="3.6.1.23"/>
    </reaction>
</comment>
<comment type="catalytic activity">
    <reaction evidence="1">
        <text>dTTP + H2O = dTMP + diphosphate + H(+)</text>
        <dbReference type="Rhea" id="RHEA:28534"/>
        <dbReference type="ChEBI" id="CHEBI:15377"/>
        <dbReference type="ChEBI" id="CHEBI:15378"/>
        <dbReference type="ChEBI" id="CHEBI:33019"/>
        <dbReference type="ChEBI" id="CHEBI:37568"/>
        <dbReference type="ChEBI" id="CHEBI:63528"/>
        <dbReference type="EC" id="3.6.1.9"/>
    </reaction>
</comment>
<comment type="catalytic activity">
    <reaction evidence="1">
        <text>dCTP + H2O = dCMP + diphosphate + H(+)</text>
        <dbReference type="Rhea" id="RHEA:22636"/>
        <dbReference type="ChEBI" id="CHEBI:15377"/>
        <dbReference type="ChEBI" id="CHEBI:15378"/>
        <dbReference type="ChEBI" id="CHEBI:33019"/>
        <dbReference type="ChEBI" id="CHEBI:57566"/>
        <dbReference type="ChEBI" id="CHEBI:61481"/>
        <dbReference type="EC" id="3.6.1.9"/>
    </reaction>
</comment>
<comment type="catalytic activity">
    <reaction evidence="1">
        <text>dCTP + H2O = dCMP + diphosphate + H(+)</text>
        <dbReference type="Rhea" id="RHEA:22636"/>
        <dbReference type="ChEBI" id="CHEBI:15377"/>
        <dbReference type="ChEBI" id="CHEBI:15378"/>
        <dbReference type="ChEBI" id="CHEBI:33019"/>
        <dbReference type="ChEBI" id="CHEBI:57566"/>
        <dbReference type="ChEBI" id="CHEBI:61481"/>
        <dbReference type="EC" id="3.6.1.12"/>
    </reaction>
</comment>
<comment type="cofactor">
    <cofactor evidence="1">
        <name>Mg(2+)</name>
        <dbReference type="ChEBI" id="CHEBI:18420"/>
    </cofactor>
</comment>
<comment type="subunit">
    <text evidence="1">Monomer.</text>
</comment>
<comment type="similarity">
    <text evidence="1">Belongs to the Nudix hydrolase family. NudI subfamily.</text>
</comment>
<organism>
    <name type="scientific">Escherichia coli O8 (strain IAI1)</name>
    <dbReference type="NCBI Taxonomy" id="585034"/>
    <lineage>
        <taxon>Bacteria</taxon>
        <taxon>Pseudomonadati</taxon>
        <taxon>Pseudomonadota</taxon>
        <taxon>Gammaproteobacteria</taxon>
        <taxon>Enterobacterales</taxon>
        <taxon>Enterobacteriaceae</taxon>
        <taxon>Escherichia</taxon>
    </lineage>
</organism>
<evidence type="ECO:0000255" key="1">
    <source>
        <dbReference type="HAMAP-Rule" id="MF_01846"/>
    </source>
</evidence>
<dbReference type="EC" id="3.6.1.9" evidence="1"/>
<dbReference type="EC" id="3.6.1.12" evidence="1"/>
<dbReference type="EC" id="3.6.1.-" evidence="1"/>
<dbReference type="EC" id="3.6.1.23" evidence="1"/>
<dbReference type="EMBL" id="CU928160">
    <property type="protein sequence ID" value="CAQ99170.1"/>
    <property type="molecule type" value="Genomic_DNA"/>
</dbReference>
<dbReference type="RefSeq" id="WP_001249889.1">
    <property type="nucleotide sequence ID" value="NC_011741.1"/>
</dbReference>
<dbReference type="SMR" id="B7M5T3"/>
<dbReference type="GeneID" id="93774923"/>
<dbReference type="KEGG" id="ecr:ECIAI1_2326"/>
<dbReference type="HOGENOM" id="CLU_037162_31_0_6"/>
<dbReference type="GO" id="GO:0047840">
    <property type="term" value="F:dCTP diphosphatase activity"/>
    <property type="evidence" value="ECO:0007669"/>
    <property type="project" value="UniProtKB-EC"/>
</dbReference>
<dbReference type="GO" id="GO:0036218">
    <property type="term" value="F:dTTP diphosphatase activity"/>
    <property type="evidence" value="ECO:0007669"/>
    <property type="project" value="RHEA"/>
</dbReference>
<dbReference type="GO" id="GO:0004170">
    <property type="term" value="F:dUTP diphosphatase activity"/>
    <property type="evidence" value="ECO:0007669"/>
    <property type="project" value="UniProtKB-EC"/>
</dbReference>
<dbReference type="GO" id="GO:0000287">
    <property type="term" value="F:magnesium ion binding"/>
    <property type="evidence" value="ECO:0007669"/>
    <property type="project" value="UniProtKB-UniRule"/>
</dbReference>
<dbReference type="FunFam" id="3.90.79.10:FF:000039">
    <property type="entry name" value="Nucleoside triphosphatase NudI"/>
    <property type="match status" value="1"/>
</dbReference>
<dbReference type="Gene3D" id="3.90.79.10">
    <property type="entry name" value="Nucleoside Triphosphate Pyrophosphohydrolase"/>
    <property type="match status" value="1"/>
</dbReference>
<dbReference type="HAMAP" id="MF_01846">
    <property type="entry name" value="Nudix_NudI"/>
    <property type="match status" value="1"/>
</dbReference>
<dbReference type="InterPro" id="IPR023781">
    <property type="entry name" value="Nucleoside_triphosphatase_NudI"/>
</dbReference>
<dbReference type="InterPro" id="IPR020476">
    <property type="entry name" value="Nudix_hydrolase"/>
</dbReference>
<dbReference type="InterPro" id="IPR015797">
    <property type="entry name" value="NUDIX_hydrolase-like_dom_sf"/>
</dbReference>
<dbReference type="InterPro" id="IPR020084">
    <property type="entry name" value="NUDIX_hydrolase_CS"/>
</dbReference>
<dbReference type="InterPro" id="IPR000086">
    <property type="entry name" value="NUDIX_hydrolase_dom"/>
</dbReference>
<dbReference type="NCBIfam" id="NF012016">
    <property type="entry name" value="PRK15472.1"/>
    <property type="match status" value="1"/>
</dbReference>
<dbReference type="PANTHER" id="PTHR43046">
    <property type="entry name" value="GDP-MANNOSE MANNOSYL HYDROLASE"/>
    <property type="match status" value="1"/>
</dbReference>
<dbReference type="PANTHER" id="PTHR43046:SF14">
    <property type="entry name" value="MUTT_NUDIX FAMILY PROTEIN"/>
    <property type="match status" value="1"/>
</dbReference>
<dbReference type="Pfam" id="PF00293">
    <property type="entry name" value="NUDIX"/>
    <property type="match status" value="1"/>
</dbReference>
<dbReference type="PRINTS" id="PR00502">
    <property type="entry name" value="NUDIXFAMILY"/>
</dbReference>
<dbReference type="SUPFAM" id="SSF55811">
    <property type="entry name" value="Nudix"/>
    <property type="match status" value="1"/>
</dbReference>
<dbReference type="PROSITE" id="PS51462">
    <property type="entry name" value="NUDIX"/>
    <property type="match status" value="1"/>
</dbReference>
<dbReference type="PROSITE" id="PS00893">
    <property type="entry name" value="NUDIX_BOX"/>
    <property type="match status" value="1"/>
</dbReference>